<reference key="1">
    <citation type="submission" date="2006-01" db="EMBL/GenBank/DDBJ databases">
        <title>Complete sequence of Anaeromyxobacter dehalogenans 2CP-C.</title>
        <authorList>
            <person name="Copeland A."/>
            <person name="Lucas S."/>
            <person name="Lapidus A."/>
            <person name="Barry K."/>
            <person name="Detter J.C."/>
            <person name="Glavina T."/>
            <person name="Hammon N."/>
            <person name="Israni S."/>
            <person name="Pitluck S."/>
            <person name="Brettin T."/>
            <person name="Bruce D."/>
            <person name="Han C."/>
            <person name="Tapia R."/>
            <person name="Gilna P."/>
            <person name="Kiss H."/>
            <person name="Schmutz J."/>
            <person name="Larimer F."/>
            <person name="Land M."/>
            <person name="Kyrpides N."/>
            <person name="Anderson I."/>
            <person name="Sanford R.A."/>
            <person name="Ritalahti K.M."/>
            <person name="Thomas H.S."/>
            <person name="Kirby J.R."/>
            <person name="Zhulin I.B."/>
            <person name="Loeffler F.E."/>
            <person name="Richardson P."/>
        </authorList>
    </citation>
    <scope>NUCLEOTIDE SEQUENCE [LARGE SCALE GENOMIC DNA]</scope>
    <source>
        <strain>2CP-C</strain>
    </source>
</reference>
<feature type="chain" id="PRO_0000290797" description="Small ribosomal subunit protein uS8">
    <location>
        <begin position="1"/>
        <end position="132"/>
    </location>
</feature>
<evidence type="ECO:0000255" key="1">
    <source>
        <dbReference type="HAMAP-Rule" id="MF_01302"/>
    </source>
</evidence>
<evidence type="ECO:0000305" key="2"/>
<sequence>MSFTDPIGDMLTRIRNASSARHEKCLVPASRLKVRIAEVLREEGFIKDFVLHEDGVQGAITIVLKYSADREPAISDIKRVSKPGLRRYVATDSIPRVLNGMGIAILSTSKGVMVDREARKQKVGGELICTVW</sequence>
<accession>Q2IJ72</accession>
<name>RS8_ANADE</name>
<proteinExistence type="inferred from homology"/>
<comment type="function">
    <text evidence="1">One of the primary rRNA binding proteins, it binds directly to 16S rRNA central domain where it helps coordinate assembly of the platform of the 30S subunit.</text>
</comment>
<comment type="subunit">
    <text evidence="1">Part of the 30S ribosomal subunit. Contacts proteins S5 and S12.</text>
</comment>
<comment type="similarity">
    <text evidence="1">Belongs to the universal ribosomal protein uS8 family.</text>
</comment>
<protein>
    <recommendedName>
        <fullName evidence="1">Small ribosomal subunit protein uS8</fullName>
    </recommendedName>
    <alternativeName>
        <fullName evidence="2">30S ribosomal protein S8</fullName>
    </alternativeName>
</protein>
<keyword id="KW-1185">Reference proteome</keyword>
<keyword id="KW-0687">Ribonucleoprotein</keyword>
<keyword id="KW-0689">Ribosomal protein</keyword>
<keyword id="KW-0694">RNA-binding</keyword>
<keyword id="KW-0699">rRNA-binding</keyword>
<dbReference type="EMBL" id="CP000251">
    <property type="protein sequence ID" value="ABC81703.1"/>
    <property type="molecule type" value="Genomic_DNA"/>
</dbReference>
<dbReference type="RefSeq" id="WP_011420986.1">
    <property type="nucleotide sequence ID" value="NC_007760.1"/>
</dbReference>
<dbReference type="SMR" id="Q2IJ72"/>
<dbReference type="STRING" id="290397.Adeh_1932"/>
<dbReference type="KEGG" id="ade:Adeh_1932"/>
<dbReference type="eggNOG" id="COG0096">
    <property type="taxonomic scope" value="Bacteria"/>
</dbReference>
<dbReference type="HOGENOM" id="CLU_098428_0_2_7"/>
<dbReference type="OrthoDB" id="9802617at2"/>
<dbReference type="Proteomes" id="UP000001935">
    <property type="component" value="Chromosome"/>
</dbReference>
<dbReference type="GO" id="GO:1990904">
    <property type="term" value="C:ribonucleoprotein complex"/>
    <property type="evidence" value="ECO:0007669"/>
    <property type="project" value="UniProtKB-KW"/>
</dbReference>
<dbReference type="GO" id="GO:0005840">
    <property type="term" value="C:ribosome"/>
    <property type="evidence" value="ECO:0007669"/>
    <property type="project" value="UniProtKB-KW"/>
</dbReference>
<dbReference type="GO" id="GO:0019843">
    <property type="term" value="F:rRNA binding"/>
    <property type="evidence" value="ECO:0007669"/>
    <property type="project" value="UniProtKB-UniRule"/>
</dbReference>
<dbReference type="GO" id="GO:0003735">
    <property type="term" value="F:structural constituent of ribosome"/>
    <property type="evidence" value="ECO:0007669"/>
    <property type="project" value="InterPro"/>
</dbReference>
<dbReference type="GO" id="GO:0006412">
    <property type="term" value="P:translation"/>
    <property type="evidence" value="ECO:0007669"/>
    <property type="project" value="UniProtKB-UniRule"/>
</dbReference>
<dbReference type="FunFam" id="3.30.1370.30:FF:000002">
    <property type="entry name" value="30S ribosomal protein S8"/>
    <property type="match status" value="1"/>
</dbReference>
<dbReference type="FunFam" id="3.30.1490.10:FF:000001">
    <property type="entry name" value="30S ribosomal protein S8"/>
    <property type="match status" value="1"/>
</dbReference>
<dbReference type="Gene3D" id="3.30.1370.30">
    <property type="match status" value="1"/>
</dbReference>
<dbReference type="Gene3D" id="3.30.1490.10">
    <property type="match status" value="1"/>
</dbReference>
<dbReference type="HAMAP" id="MF_01302_B">
    <property type="entry name" value="Ribosomal_uS8_B"/>
    <property type="match status" value="1"/>
</dbReference>
<dbReference type="InterPro" id="IPR000630">
    <property type="entry name" value="Ribosomal_uS8"/>
</dbReference>
<dbReference type="InterPro" id="IPR047863">
    <property type="entry name" value="Ribosomal_uS8_CS"/>
</dbReference>
<dbReference type="InterPro" id="IPR035987">
    <property type="entry name" value="Ribosomal_uS8_sf"/>
</dbReference>
<dbReference type="NCBIfam" id="NF001109">
    <property type="entry name" value="PRK00136.1"/>
    <property type="match status" value="1"/>
</dbReference>
<dbReference type="PANTHER" id="PTHR11758">
    <property type="entry name" value="40S RIBOSOMAL PROTEIN S15A"/>
    <property type="match status" value="1"/>
</dbReference>
<dbReference type="Pfam" id="PF00410">
    <property type="entry name" value="Ribosomal_S8"/>
    <property type="match status" value="1"/>
</dbReference>
<dbReference type="SUPFAM" id="SSF56047">
    <property type="entry name" value="Ribosomal protein S8"/>
    <property type="match status" value="1"/>
</dbReference>
<dbReference type="PROSITE" id="PS00053">
    <property type="entry name" value="RIBOSOMAL_S8"/>
    <property type="match status" value="1"/>
</dbReference>
<organism>
    <name type="scientific">Anaeromyxobacter dehalogenans (strain 2CP-C)</name>
    <dbReference type="NCBI Taxonomy" id="290397"/>
    <lineage>
        <taxon>Bacteria</taxon>
        <taxon>Pseudomonadati</taxon>
        <taxon>Myxococcota</taxon>
        <taxon>Myxococcia</taxon>
        <taxon>Myxococcales</taxon>
        <taxon>Cystobacterineae</taxon>
        <taxon>Anaeromyxobacteraceae</taxon>
        <taxon>Anaeromyxobacter</taxon>
    </lineage>
</organism>
<gene>
    <name evidence="1" type="primary">rpsH</name>
    <name type="ordered locus">Adeh_1932</name>
</gene>